<comment type="function">
    <text evidence="1">May cooperate with CD180 and TLR4 to mediate the innate immune response to bacterial lipopolysaccharide (LPS) and cytokine production. Important for efficient CD180 cell surface expression.</text>
</comment>
<comment type="subunit">
    <text evidence="2 3">M-shaped tetramer of two CD180-LY86 heterodimers.</text>
</comment>
<comment type="interaction">
    <interactant intactId="EBI-79494">
        <id>O88188</id>
    </interactant>
    <interactant intactId="EBI-79487">
        <id>Q62192</id>
        <label>Cd180</label>
    </interactant>
    <organismsDiffer>false</organismsDiffer>
    <experiments>5</experiments>
</comment>
<comment type="subcellular location">
    <subcellularLocation>
        <location>Secreted</location>
        <location>Extracellular space</location>
    </subcellularLocation>
    <text>Associated with CD180 at the cell surface.</text>
</comment>
<comment type="tissue specificity">
    <text>Highly expressed in spleen, liver, brain and thymus, and at lower levels in kidney.</text>
</comment>
<name>LY86_MOUSE</name>
<feature type="signal peptide" evidence="4">
    <location>
        <begin position="1"/>
        <end position="19"/>
    </location>
</feature>
<feature type="chain" id="PRO_0000018615" description="Lymphocyte antigen 86">
    <location>
        <begin position="20"/>
        <end position="162"/>
    </location>
</feature>
<feature type="glycosylation site" description="N-linked (GlcNAc...) asparagine" evidence="2">
    <location>
        <position position="96"/>
    </location>
</feature>
<feature type="glycosylation site" description="N-linked (GlcNAc...) asparagine" evidence="2">
    <location>
        <position position="156"/>
    </location>
</feature>
<feature type="disulfide bond">
    <location>
        <begin position="33"/>
        <end position="58"/>
    </location>
</feature>
<feature type="disulfide bond">
    <location>
        <begin position="45"/>
        <end position="154"/>
    </location>
</feature>
<feature type="disulfide bond">
    <location>
        <begin position="102"/>
        <end position="112"/>
    </location>
</feature>
<feature type="strand" evidence="5">
    <location>
        <begin position="30"/>
        <end position="35"/>
    </location>
</feature>
<feature type="strand" evidence="5">
    <location>
        <begin position="38"/>
        <end position="44"/>
    </location>
</feature>
<feature type="strand" evidence="5">
    <location>
        <begin position="52"/>
        <end position="57"/>
    </location>
</feature>
<feature type="strand" evidence="5">
    <location>
        <begin position="60"/>
        <end position="62"/>
    </location>
</feature>
<feature type="strand" evidence="5">
    <location>
        <begin position="67"/>
        <end position="73"/>
    </location>
</feature>
<feature type="strand" evidence="5">
    <location>
        <begin position="79"/>
        <end position="89"/>
    </location>
</feature>
<feature type="strand" evidence="5">
    <location>
        <begin position="92"/>
        <end position="103"/>
    </location>
</feature>
<feature type="strand" evidence="5">
    <location>
        <begin position="106"/>
        <end position="111"/>
    </location>
</feature>
<feature type="strand" evidence="5">
    <location>
        <begin position="119"/>
        <end position="125"/>
    </location>
</feature>
<feature type="strand" evidence="5">
    <location>
        <begin position="130"/>
        <end position="132"/>
    </location>
</feature>
<feature type="strand" evidence="5">
    <location>
        <begin position="135"/>
        <end position="146"/>
    </location>
</feature>
<feature type="strand" evidence="5">
    <location>
        <begin position="151"/>
        <end position="161"/>
    </location>
</feature>
<accession>O88188</accession>
<accession>Q4VAF1</accession>
<accession>Q5D046</accession>
<reference key="1">
    <citation type="journal article" date="1998" name="J. Immunol.">
        <title>Mouse MD-1, a molecule that is physically associated with RP105 and positively regulates its expression.</title>
        <authorList>
            <person name="Miyake K."/>
            <person name="Shimazu R."/>
            <person name="Kondo J."/>
            <person name="Niki T."/>
            <person name="Akashi S."/>
            <person name="Ogata H."/>
            <person name="Yamashita Y."/>
            <person name="Miura Y."/>
            <person name="Kimoto M."/>
        </authorList>
    </citation>
    <scope>NUCLEOTIDE SEQUENCE [MRNA]</scope>
    <scope>PROTEIN SEQUENCE OF 20-44</scope>
    <source>
        <tissue>B-cell</tissue>
    </source>
</reference>
<reference key="2">
    <citation type="journal article" date="2005" name="Science">
        <title>The transcriptional landscape of the mammalian genome.</title>
        <authorList>
            <person name="Carninci P."/>
            <person name="Kasukawa T."/>
            <person name="Katayama S."/>
            <person name="Gough J."/>
            <person name="Frith M.C."/>
            <person name="Maeda N."/>
            <person name="Oyama R."/>
            <person name="Ravasi T."/>
            <person name="Lenhard B."/>
            <person name="Wells C."/>
            <person name="Kodzius R."/>
            <person name="Shimokawa K."/>
            <person name="Bajic V.B."/>
            <person name="Brenner S.E."/>
            <person name="Batalov S."/>
            <person name="Forrest A.R."/>
            <person name="Zavolan M."/>
            <person name="Davis M.J."/>
            <person name="Wilming L.G."/>
            <person name="Aidinis V."/>
            <person name="Allen J.E."/>
            <person name="Ambesi-Impiombato A."/>
            <person name="Apweiler R."/>
            <person name="Aturaliya R.N."/>
            <person name="Bailey T.L."/>
            <person name="Bansal M."/>
            <person name="Baxter L."/>
            <person name="Beisel K.W."/>
            <person name="Bersano T."/>
            <person name="Bono H."/>
            <person name="Chalk A.M."/>
            <person name="Chiu K.P."/>
            <person name="Choudhary V."/>
            <person name="Christoffels A."/>
            <person name="Clutterbuck D.R."/>
            <person name="Crowe M.L."/>
            <person name="Dalla E."/>
            <person name="Dalrymple B.P."/>
            <person name="de Bono B."/>
            <person name="Della Gatta G."/>
            <person name="di Bernardo D."/>
            <person name="Down T."/>
            <person name="Engstrom P."/>
            <person name="Fagiolini M."/>
            <person name="Faulkner G."/>
            <person name="Fletcher C.F."/>
            <person name="Fukushima T."/>
            <person name="Furuno M."/>
            <person name="Futaki S."/>
            <person name="Gariboldi M."/>
            <person name="Georgii-Hemming P."/>
            <person name="Gingeras T.R."/>
            <person name="Gojobori T."/>
            <person name="Green R.E."/>
            <person name="Gustincich S."/>
            <person name="Harbers M."/>
            <person name="Hayashi Y."/>
            <person name="Hensch T.K."/>
            <person name="Hirokawa N."/>
            <person name="Hill D."/>
            <person name="Huminiecki L."/>
            <person name="Iacono M."/>
            <person name="Ikeo K."/>
            <person name="Iwama A."/>
            <person name="Ishikawa T."/>
            <person name="Jakt M."/>
            <person name="Kanapin A."/>
            <person name="Katoh M."/>
            <person name="Kawasawa Y."/>
            <person name="Kelso J."/>
            <person name="Kitamura H."/>
            <person name="Kitano H."/>
            <person name="Kollias G."/>
            <person name="Krishnan S.P."/>
            <person name="Kruger A."/>
            <person name="Kummerfeld S.K."/>
            <person name="Kurochkin I.V."/>
            <person name="Lareau L.F."/>
            <person name="Lazarevic D."/>
            <person name="Lipovich L."/>
            <person name="Liu J."/>
            <person name="Liuni S."/>
            <person name="McWilliam S."/>
            <person name="Madan Babu M."/>
            <person name="Madera M."/>
            <person name="Marchionni L."/>
            <person name="Matsuda H."/>
            <person name="Matsuzawa S."/>
            <person name="Miki H."/>
            <person name="Mignone F."/>
            <person name="Miyake S."/>
            <person name="Morris K."/>
            <person name="Mottagui-Tabar S."/>
            <person name="Mulder N."/>
            <person name="Nakano N."/>
            <person name="Nakauchi H."/>
            <person name="Ng P."/>
            <person name="Nilsson R."/>
            <person name="Nishiguchi S."/>
            <person name="Nishikawa S."/>
            <person name="Nori F."/>
            <person name="Ohara O."/>
            <person name="Okazaki Y."/>
            <person name="Orlando V."/>
            <person name="Pang K.C."/>
            <person name="Pavan W.J."/>
            <person name="Pavesi G."/>
            <person name="Pesole G."/>
            <person name="Petrovsky N."/>
            <person name="Piazza S."/>
            <person name="Reed J."/>
            <person name="Reid J.F."/>
            <person name="Ring B.Z."/>
            <person name="Ringwald M."/>
            <person name="Rost B."/>
            <person name="Ruan Y."/>
            <person name="Salzberg S.L."/>
            <person name="Sandelin A."/>
            <person name="Schneider C."/>
            <person name="Schoenbach C."/>
            <person name="Sekiguchi K."/>
            <person name="Semple C.A."/>
            <person name="Seno S."/>
            <person name="Sessa L."/>
            <person name="Sheng Y."/>
            <person name="Shibata Y."/>
            <person name="Shimada H."/>
            <person name="Shimada K."/>
            <person name="Silva D."/>
            <person name="Sinclair B."/>
            <person name="Sperling S."/>
            <person name="Stupka E."/>
            <person name="Sugiura K."/>
            <person name="Sultana R."/>
            <person name="Takenaka Y."/>
            <person name="Taki K."/>
            <person name="Tammoja K."/>
            <person name="Tan S.L."/>
            <person name="Tang S."/>
            <person name="Taylor M.S."/>
            <person name="Tegner J."/>
            <person name="Teichmann S.A."/>
            <person name="Ueda H.R."/>
            <person name="van Nimwegen E."/>
            <person name="Verardo R."/>
            <person name="Wei C.L."/>
            <person name="Yagi K."/>
            <person name="Yamanishi H."/>
            <person name="Zabarovsky E."/>
            <person name="Zhu S."/>
            <person name="Zimmer A."/>
            <person name="Hide W."/>
            <person name="Bult C."/>
            <person name="Grimmond S.M."/>
            <person name="Teasdale R.D."/>
            <person name="Liu E.T."/>
            <person name="Brusic V."/>
            <person name="Quackenbush J."/>
            <person name="Wahlestedt C."/>
            <person name="Mattick J.S."/>
            <person name="Hume D.A."/>
            <person name="Kai C."/>
            <person name="Sasaki D."/>
            <person name="Tomaru Y."/>
            <person name="Fukuda S."/>
            <person name="Kanamori-Katayama M."/>
            <person name="Suzuki M."/>
            <person name="Aoki J."/>
            <person name="Arakawa T."/>
            <person name="Iida J."/>
            <person name="Imamura K."/>
            <person name="Itoh M."/>
            <person name="Kato T."/>
            <person name="Kawaji H."/>
            <person name="Kawagashira N."/>
            <person name="Kawashima T."/>
            <person name="Kojima M."/>
            <person name="Kondo S."/>
            <person name="Konno H."/>
            <person name="Nakano K."/>
            <person name="Ninomiya N."/>
            <person name="Nishio T."/>
            <person name="Okada M."/>
            <person name="Plessy C."/>
            <person name="Shibata K."/>
            <person name="Shiraki T."/>
            <person name="Suzuki S."/>
            <person name="Tagami M."/>
            <person name="Waki K."/>
            <person name="Watahiki A."/>
            <person name="Okamura-Oho Y."/>
            <person name="Suzuki H."/>
            <person name="Kawai J."/>
            <person name="Hayashizaki Y."/>
        </authorList>
    </citation>
    <scope>NUCLEOTIDE SEQUENCE [LARGE SCALE MRNA]</scope>
    <source>
        <strain>C57BL/6J</strain>
    </source>
</reference>
<reference key="3">
    <citation type="submission" date="2005-07" db="EMBL/GenBank/DDBJ databases">
        <authorList>
            <person name="Mural R.J."/>
            <person name="Adams M.D."/>
            <person name="Myers E.W."/>
            <person name="Smith H.O."/>
            <person name="Venter J.C."/>
        </authorList>
    </citation>
    <scope>NUCLEOTIDE SEQUENCE [LARGE SCALE GENOMIC DNA]</scope>
</reference>
<reference key="4">
    <citation type="journal article" date="2004" name="Genome Res.">
        <title>The status, quality, and expansion of the NIH full-length cDNA project: the Mammalian Gene Collection (MGC).</title>
        <authorList>
            <consortium name="The MGC Project Team"/>
        </authorList>
    </citation>
    <scope>NUCLEOTIDE SEQUENCE [LARGE SCALE MRNA]</scope>
    <source>
        <strain>C57BL/6J</strain>
        <tissue>Mammary gland</tissue>
    </source>
</reference>
<reference key="5">
    <citation type="journal article" date="2000" name="J. Immunol.">
        <title>Regulation of gene expression of murine MD-1 regulates subsequent T cell activation and cytokine production.</title>
        <authorList>
            <person name="Gorczynski R.M."/>
            <person name="Chen Z."/>
            <person name="Clark D.A."/>
            <person name="Hu J."/>
            <person name="Yu G."/>
            <person name="Li X."/>
            <person name="Tsang W."/>
            <person name="Hadidi S."/>
        </authorList>
    </citation>
    <scope>FUNCTION</scope>
</reference>
<reference key="6">
    <citation type="journal article" date="2010" name="Cell">
        <title>A tissue-specific atlas of mouse protein phosphorylation and expression.</title>
        <authorList>
            <person name="Huttlin E.L."/>
            <person name="Jedrychowski M.P."/>
            <person name="Elias J.E."/>
            <person name="Goswami T."/>
            <person name="Rad R."/>
            <person name="Beausoleil S.A."/>
            <person name="Villen J."/>
            <person name="Haas W."/>
            <person name="Sowa M.E."/>
            <person name="Gygi S.P."/>
        </authorList>
    </citation>
    <scope>IDENTIFICATION BY MASS SPECTROMETRY [LARGE SCALE ANALYSIS]</scope>
    <source>
        <tissue>Spleen</tissue>
    </source>
</reference>
<reference key="7">
    <citation type="journal article" date="2010" name="J. Mol. Biol.">
        <title>Crystal structure of mouse MD-1 with endogenous phospholipid bound in its cavity.</title>
        <authorList>
            <person name="Harada H."/>
            <person name="Ohto U."/>
            <person name="Satow Y."/>
        </authorList>
    </citation>
    <scope>X-RAY CRYSTALLOGRAPHY (1.65 ANGSTROMS) IN COMPLEX WITH PHOSPHOLIPID</scope>
    <scope>SUBUNIT</scope>
    <scope>GLYCOSYLATION AT ASN-96 AND ASN-156</scope>
    <scope>DISULFIDE BONDS</scope>
</reference>
<reference key="8">
    <citation type="journal article" date="2011" name="J. Mol. Biol.">
        <title>Crystal structures of mouse and human RP105/MD-1 complexes reveal unique dimer organization of the toll-like receptor family.</title>
        <authorList>
            <person name="Ohto U."/>
            <person name="Miyake K."/>
            <person name="Shimizu T."/>
        </authorList>
    </citation>
    <scope>X-RAY CRYSTALLOGRAPHY (1.9 ANGSTROMS) OF 20-162 IN COMPLEX WITH CD180</scope>
    <scope>SUBUNIT</scope>
    <scope>DISULFIDE BONDS</scope>
</reference>
<proteinExistence type="evidence at protein level"/>
<evidence type="ECO:0000269" key="1">
    <source>
    </source>
</evidence>
<evidence type="ECO:0000269" key="2">
    <source>
    </source>
</evidence>
<evidence type="ECO:0000269" key="3">
    <source>
    </source>
</evidence>
<evidence type="ECO:0000269" key="4">
    <source>
    </source>
</evidence>
<evidence type="ECO:0007829" key="5">
    <source>
        <dbReference type="PDB" id="3M7O"/>
    </source>
</evidence>
<keyword id="KW-0002">3D-structure</keyword>
<keyword id="KW-0903">Direct protein sequencing</keyword>
<keyword id="KW-1015">Disulfide bond</keyword>
<keyword id="KW-0325">Glycoprotein</keyword>
<keyword id="KW-0391">Immunity</keyword>
<keyword id="KW-0395">Inflammatory response</keyword>
<keyword id="KW-0399">Innate immunity</keyword>
<keyword id="KW-1185">Reference proteome</keyword>
<keyword id="KW-0964">Secreted</keyword>
<keyword id="KW-0732">Signal</keyword>
<sequence>MNGVAAALLVWILTSPSSSDHGSENGWPKHTACNSGGLEVVYQSCDPLQDFGLSIDQCSKQIQSNLNIRFGIILRQDIRKLFLDITLMAKGSSILNYSYPLCEEDQPKFSFCGRRKGEQIYYAGPVNNPGLDVPQGEYQLLLELYNENRATVACANATVTSS</sequence>
<organism>
    <name type="scientific">Mus musculus</name>
    <name type="common">Mouse</name>
    <dbReference type="NCBI Taxonomy" id="10090"/>
    <lineage>
        <taxon>Eukaryota</taxon>
        <taxon>Metazoa</taxon>
        <taxon>Chordata</taxon>
        <taxon>Craniata</taxon>
        <taxon>Vertebrata</taxon>
        <taxon>Euteleostomi</taxon>
        <taxon>Mammalia</taxon>
        <taxon>Eutheria</taxon>
        <taxon>Euarchontoglires</taxon>
        <taxon>Glires</taxon>
        <taxon>Rodentia</taxon>
        <taxon>Myomorpha</taxon>
        <taxon>Muroidea</taxon>
        <taxon>Muridae</taxon>
        <taxon>Murinae</taxon>
        <taxon>Mus</taxon>
        <taxon>Mus</taxon>
    </lineage>
</organism>
<dbReference type="EMBL" id="AB007599">
    <property type="protein sequence ID" value="BAA32399.1"/>
    <property type="molecule type" value="mRNA"/>
</dbReference>
<dbReference type="EMBL" id="AK027929">
    <property type="protein sequence ID" value="BAC25670.1"/>
    <property type="molecule type" value="mRNA"/>
</dbReference>
<dbReference type="EMBL" id="CH466546">
    <property type="protein sequence ID" value="EDL40921.1"/>
    <property type="molecule type" value="Genomic_DNA"/>
</dbReference>
<dbReference type="EMBL" id="BC065783">
    <property type="protein sequence ID" value="AAH65783.1"/>
    <property type="molecule type" value="mRNA"/>
</dbReference>
<dbReference type="EMBL" id="BC096414">
    <property type="protein sequence ID" value="AAH96414.1"/>
    <property type="molecule type" value="mRNA"/>
</dbReference>
<dbReference type="CCDS" id="CCDS26457.1"/>
<dbReference type="RefSeq" id="NP_034875.1">
    <property type="nucleotide sequence ID" value="NM_010745.3"/>
</dbReference>
<dbReference type="PDB" id="3M7O">
    <property type="method" value="X-ray"/>
    <property type="resolution" value="1.65 A"/>
    <property type="chains" value="A/B/C/D=1-162"/>
</dbReference>
<dbReference type="PDB" id="3T6Q">
    <property type="method" value="X-ray"/>
    <property type="resolution" value="1.90 A"/>
    <property type="chains" value="C/D=20-162"/>
</dbReference>
<dbReference type="PDBsum" id="3M7O"/>
<dbReference type="PDBsum" id="3T6Q"/>
<dbReference type="SMR" id="O88188"/>
<dbReference type="CORUM" id="O88188"/>
<dbReference type="DIP" id="DIP-30960N"/>
<dbReference type="FunCoup" id="O88188">
    <property type="interactions" value="106"/>
</dbReference>
<dbReference type="IntAct" id="O88188">
    <property type="interactions" value="1"/>
</dbReference>
<dbReference type="STRING" id="10090.ENSMUSP00000021860"/>
<dbReference type="GlyCosmos" id="O88188">
    <property type="glycosylation" value="2 sites, No reported glycans"/>
</dbReference>
<dbReference type="GlyGen" id="O88188">
    <property type="glycosylation" value="2 sites, 2 N-linked glycans (2 sites)"/>
</dbReference>
<dbReference type="iPTMnet" id="O88188"/>
<dbReference type="PhosphoSitePlus" id="O88188"/>
<dbReference type="PaxDb" id="10090-ENSMUSP00000021860"/>
<dbReference type="PeptideAtlas" id="O88188"/>
<dbReference type="ProteomicsDB" id="295734"/>
<dbReference type="Antibodypedia" id="9679">
    <property type="antibodies" value="393 antibodies from 32 providers"/>
</dbReference>
<dbReference type="DNASU" id="17084"/>
<dbReference type="Ensembl" id="ENSMUST00000021860.7">
    <property type="protein sequence ID" value="ENSMUSP00000021860.6"/>
    <property type="gene ID" value="ENSMUSG00000021423.7"/>
</dbReference>
<dbReference type="GeneID" id="17084"/>
<dbReference type="KEGG" id="mmu:17084"/>
<dbReference type="UCSC" id="uc007qcr.2">
    <property type="organism name" value="mouse"/>
</dbReference>
<dbReference type="AGR" id="MGI:1321404"/>
<dbReference type="CTD" id="9450"/>
<dbReference type="MGI" id="MGI:1321404">
    <property type="gene designation" value="Ly86"/>
</dbReference>
<dbReference type="VEuPathDB" id="HostDB:ENSMUSG00000021423"/>
<dbReference type="eggNOG" id="ENOG502S63U">
    <property type="taxonomic scope" value="Eukaryota"/>
</dbReference>
<dbReference type="GeneTree" id="ENSGT00390000018605"/>
<dbReference type="HOGENOM" id="CLU_145135_0_0_1"/>
<dbReference type="InParanoid" id="O88188"/>
<dbReference type="OMA" id="NYSYPIC"/>
<dbReference type="OrthoDB" id="9889383at2759"/>
<dbReference type="PhylomeDB" id="O88188"/>
<dbReference type="TreeFam" id="TF335876"/>
<dbReference type="Reactome" id="R-MMU-166016">
    <property type="pathway name" value="Toll Like Receptor 4 (TLR4) Cascade"/>
</dbReference>
<dbReference type="BioGRID-ORCS" id="17084">
    <property type="hits" value="0 hits in 77 CRISPR screens"/>
</dbReference>
<dbReference type="ChiTaRS" id="Ly86">
    <property type="organism name" value="mouse"/>
</dbReference>
<dbReference type="EvolutionaryTrace" id="O88188"/>
<dbReference type="PRO" id="PR:O88188"/>
<dbReference type="Proteomes" id="UP000000589">
    <property type="component" value="Chromosome 13"/>
</dbReference>
<dbReference type="RNAct" id="O88188">
    <property type="molecule type" value="protein"/>
</dbReference>
<dbReference type="Bgee" id="ENSMUSG00000021423">
    <property type="expression patterns" value="Expressed in mesenteric lymph node and 181 other cell types or tissues"/>
</dbReference>
<dbReference type="GO" id="GO:0005576">
    <property type="term" value="C:extracellular region"/>
    <property type="evidence" value="ECO:0007669"/>
    <property type="project" value="UniProtKB-SubCell"/>
</dbReference>
<dbReference type="GO" id="GO:0006954">
    <property type="term" value="P:inflammatory response"/>
    <property type="evidence" value="ECO:0007669"/>
    <property type="project" value="UniProtKB-KW"/>
</dbReference>
<dbReference type="GO" id="GO:0045087">
    <property type="term" value="P:innate immune response"/>
    <property type="evidence" value="ECO:0007669"/>
    <property type="project" value="UniProtKB-KW"/>
</dbReference>
<dbReference type="GO" id="GO:0031663">
    <property type="term" value="P:lipopolysaccharide-mediated signaling pathway"/>
    <property type="evidence" value="ECO:0000314"/>
    <property type="project" value="MGI"/>
</dbReference>
<dbReference type="GO" id="GO:0031666">
    <property type="term" value="P:positive regulation of lipopolysaccharide-mediated signaling pathway"/>
    <property type="evidence" value="ECO:0000314"/>
    <property type="project" value="MGI"/>
</dbReference>
<dbReference type="Gene3D" id="2.60.40.770">
    <property type="match status" value="1"/>
</dbReference>
<dbReference type="InterPro" id="IPR014756">
    <property type="entry name" value="Ig_E-set"/>
</dbReference>
<dbReference type="InterPro" id="IPR039945">
    <property type="entry name" value="LY86"/>
</dbReference>
<dbReference type="InterPro" id="IPR003172">
    <property type="entry name" value="ML_dom"/>
</dbReference>
<dbReference type="PANTHER" id="PTHR20838">
    <property type="entry name" value="LYMPHOCYTE ANTIGEN 86"/>
    <property type="match status" value="1"/>
</dbReference>
<dbReference type="PANTHER" id="PTHR20838:SF0">
    <property type="entry name" value="LYMPHOCYTE ANTIGEN 86"/>
    <property type="match status" value="1"/>
</dbReference>
<dbReference type="Pfam" id="PF02221">
    <property type="entry name" value="E1_DerP2_DerF2"/>
    <property type="match status" value="1"/>
</dbReference>
<dbReference type="SMART" id="SM00737">
    <property type="entry name" value="ML"/>
    <property type="match status" value="1"/>
</dbReference>
<dbReference type="SUPFAM" id="SSF81296">
    <property type="entry name" value="E set domains"/>
    <property type="match status" value="1"/>
</dbReference>
<protein>
    <recommendedName>
        <fullName>Lymphocyte antigen 86</fullName>
        <shortName>Ly-86</shortName>
    </recommendedName>
    <alternativeName>
        <fullName>Protein MD-1</fullName>
    </alternativeName>
</protein>
<gene>
    <name type="primary">Ly86</name>
    <name type="synonym">Md1</name>
</gene>